<reference key="1">
    <citation type="journal article" date="2005" name="Nucleic Acids Res.">
        <title>The genome sequence of Salmonella enterica serovar Choleraesuis, a highly invasive and resistant zoonotic pathogen.</title>
        <authorList>
            <person name="Chiu C.-H."/>
            <person name="Tang P."/>
            <person name="Chu C."/>
            <person name="Hu S."/>
            <person name="Bao Q."/>
            <person name="Yu J."/>
            <person name="Chou Y.-Y."/>
            <person name="Wang H.-S."/>
            <person name="Lee Y.-S."/>
        </authorList>
    </citation>
    <scope>NUCLEOTIDE SEQUENCE [LARGE SCALE GENOMIC DNA]</scope>
    <source>
        <strain>SC-B67</strain>
    </source>
</reference>
<keyword id="KW-0687">Ribonucleoprotein</keyword>
<keyword id="KW-0689">Ribosomal protein</keyword>
<keyword id="KW-0694">RNA-binding</keyword>
<keyword id="KW-0699">rRNA-binding</keyword>
<keyword id="KW-0820">tRNA-binding</keyword>
<name>RL16_SALCH</name>
<comment type="function">
    <text evidence="1">Binds 23S rRNA and is also seen to make contacts with the A and possibly P site tRNAs.</text>
</comment>
<comment type="subunit">
    <text evidence="1">Part of the 50S ribosomal subunit.</text>
</comment>
<comment type="similarity">
    <text evidence="1">Belongs to the universal ribosomal protein uL16 family.</text>
</comment>
<proteinExistence type="inferred from homology"/>
<feature type="chain" id="PRO_0000062191" description="Large ribosomal subunit protein uL16">
    <location>
        <begin position="1"/>
        <end position="136"/>
    </location>
</feature>
<protein>
    <recommendedName>
        <fullName evidence="1">Large ribosomal subunit protein uL16</fullName>
    </recommendedName>
    <alternativeName>
        <fullName evidence="2">50S ribosomal protein L16</fullName>
    </alternativeName>
</protein>
<dbReference type="EMBL" id="AE017220">
    <property type="protein sequence ID" value="AAX67273.1"/>
    <property type="molecule type" value="Genomic_DNA"/>
</dbReference>
<dbReference type="RefSeq" id="WP_000941208.1">
    <property type="nucleotide sequence ID" value="NC_006905.1"/>
</dbReference>
<dbReference type="SMR" id="Q57J39"/>
<dbReference type="GeneID" id="93035738"/>
<dbReference type="KEGG" id="sec:SCH_3367"/>
<dbReference type="HOGENOM" id="CLU_078858_2_1_6"/>
<dbReference type="Proteomes" id="UP000000538">
    <property type="component" value="Chromosome"/>
</dbReference>
<dbReference type="GO" id="GO:0022625">
    <property type="term" value="C:cytosolic large ribosomal subunit"/>
    <property type="evidence" value="ECO:0007669"/>
    <property type="project" value="TreeGrafter"/>
</dbReference>
<dbReference type="GO" id="GO:0019843">
    <property type="term" value="F:rRNA binding"/>
    <property type="evidence" value="ECO:0007669"/>
    <property type="project" value="UniProtKB-UniRule"/>
</dbReference>
<dbReference type="GO" id="GO:0003735">
    <property type="term" value="F:structural constituent of ribosome"/>
    <property type="evidence" value="ECO:0007669"/>
    <property type="project" value="InterPro"/>
</dbReference>
<dbReference type="GO" id="GO:0000049">
    <property type="term" value="F:tRNA binding"/>
    <property type="evidence" value="ECO:0007669"/>
    <property type="project" value="UniProtKB-KW"/>
</dbReference>
<dbReference type="GO" id="GO:0006412">
    <property type="term" value="P:translation"/>
    <property type="evidence" value="ECO:0007669"/>
    <property type="project" value="UniProtKB-UniRule"/>
</dbReference>
<dbReference type="CDD" id="cd01433">
    <property type="entry name" value="Ribosomal_L16_L10e"/>
    <property type="match status" value="1"/>
</dbReference>
<dbReference type="FunFam" id="3.90.1170.10:FF:000001">
    <property type="entry name" value="50S ribosomal protein L16"/>
    <property type="match status" value="1"/>
</dbReference>
<dbReference type="Gene3D" id="3.90.1170.10">
    <property type="entry name" value="Ribosomal protein L10e/L16"/>
    <property type="match status" value="1"/>
</dbReference>
<dbReference type="HAMAP" id="MF_01342">
    <property type="entry name" value="Ribosomal_uL16"/>
    <property type="match status" value="1"/>
</dbReference>
<dbReference type="InterPro" id="IPR047873">
    <property type="entry name" value="Ribosomal_uL16"/>
</dbReference>
<dbReference type="InterPro" id="IPR000114">
    <property type="entry name" value="Ribosomal_uL16_bact-type"/>
</dbReference>
<dbReference type="InterPro" id="IPR020798">
    <property type="entry name" value="Ribosomal_uL16_CS"/>
</dbReference>
<dbReference type="InterPro" id="IPR016180">
    <property type="entry name" value="Ribosomal_uL16_dom"/>
</dbReference>
<dbReference type="InterPro" id="IPR036920">
    <property type="entry name" value="Ribosomal_uL16_sf"/>
</dbReference>
<dbReference type="NCBIfam" id="TIGR01164">
    <property type="entry name" value="rplP_bact"/>
    <property type="match status" value="1"/>
</dbReference>
<dbReference type="PANTHER" id="PTHR12220">
    <property type="entry name" value="50S/60S RIBOSOMAL PROTEIN L16"/>
    <property type="match status" value="1"/>
</dbReference>
<dbReference type="PANTHER" id="PTHR12220:SF13">
    <property type="entry name" value="LARGE RIBOSOMAL SUBUNIT PROTEIN UL16M"/>
    <property type="match status" value="1"/>
</dbReference>
<dbReference type="Pfam" id="PF00252">
    <property type="entry name" value="Ribosomal_L16"/>
    <property type="match status" value="1"/>
</dbReference>
<dbReference type="PRINTS" id="PR00060">
    <property type="entry name" value="RIBOSOMALL16"/>
</dbReference>
<dbReference type="SUPFAM" id="SSF54686">
    <property type="entry name" value="Ribosomal protein L16p/L10e"/>
    <property type="match status" value="1"/>
</dbReference>
<dbReference type="PROSITE" id="PS00586">
    <property type="entry name" value="RIBOSOMAL_L16_1"/>
    <property type="match status" value="1"/>
</dbReference>
<dbReference type="PROSITE" id="PS00701">
    <property type="entry name" value="RIBOSOMAL_L16_2"/>
    <property type="match status" value="1"/>
</dbReference>
<accession>Q57J39</accession>
<sequence length="136" mass="15194">MLQPKRTKFRKMHKGRNRGLAAGADVSFGSFGLKAVGRGRLTARQIEAARRAMTRAVKRQGKIWIRVFPDKPITEKPLAVRMGKGKGNVEYWVALIQPGKVLYEMDGVPEELAREAFKLAAAKLPIKTTFVTKTVM</sequence>
<gene>
    <name evidence="1" type="primary">rplP</name>
    <name type="ordered locus">SCH_3367</name>
</gene>
<evidence type="ECO:0000255" key="1">
    <source>
        <dbReference type="HAMAP-Rule" id="MF_01342"/>
    </source>
</evidence>
<evidence type="ECO:0000305" key="2"/>
<organism>
    <name type="scientific">Salmonella choleraesuis (strain SC-B67)</name>
    <dbReference type="NCBI Taxonomy" id="321314"/>
    <lineage>
        <taxon>Bacteria</taxon>
        <taxon>Pseudomonadati</taxon>
        <taxon>Pseudomonadota</taxon>
        <taxon>Gammaproteobacteria</taxon>
        <taxon>Enterobacterales</taxon>
        <taxon>Enterobacteriaceae</taxon>
        <taxon>Salmonella</taxon>
    </lineage>
</organism>